<keyword id="KW-0066">ATP synthesis</keyword>
<keyword id="KW-1003">Cell membrane</keyword>
<keyword id="KW-0139">CF(1)</keyword>
<keyword id="KW-0375">Hydrogen ion transport</keyword>
<keyword id="KW-0406">Ion transport</keyword>
<keyword id="KW-0472">Membrane</keyword>
<keyword id="KW-1185">Reference proteome</keyword>
<keyword id="KW-0813">Transport</keyword>
<protein>
    <recommendedName>
        <fullName evidence="1">ATP synthase epsilon chain</fullName>
    </recommendedName>
    <alternativeName>
        <fullName evidence="1">ATP synthase F1 sector epsilon subunit</fullName>
    </alternativeName>
    <alternativeName>
        <fullName evidence="1">F-ATPase epsilon subunit</fullName>
    </alternativeName>
</protein>
<evidence type="ECO:0000255" key="1">
    <source>
        <dbReference type="HAMAP-Rule" id="MF_00530"/>
    </source>
</evidence>
<feature type="chain" id="PRO_0000265808" description="ATP synthase epsilon chain">
    <location>
        <begin position="1"/>
        <end position="132"/>
    </location>
</feature>
<sequence length="132" mass="14162">MAGTFTLRVVSPEGNVLKEEAEFVVLPGGNGEIGILPNHAPLISSIEIGVIRYTVNGKVEKIATSGGFVEVSDNKVTILADTAEPGEKVDLDRALAAKERAEKRLTQREGIDVRRAELALMRAVARINAARN</sequence>
<accession>Q24MP2</accession>
<dbReference type="EMBL" id="AP008230">
    <property type="protein sequence ID" value="BAE86700.1"/>
    <property type="molecule type" value="Genomic_DNA"/>
</dbReference>
<dbReference type="RefSeq" id="WP_011462228.1">
    <property type="nucleotide sequence ID" value="NC_007907.1"/>
</dbReference>
<dbReference type="SMR" id="Q24MP2"/>
<dbReference type="STRING" id="138119.DSY4911"/>
<dbReference type="KEGG" id="dsy:DSY4911"/>
<dbReference type="eggNOG" id="COG0355">
    <property type="taxonomic scope" value="Bacteria"/>
</dbReference>
<dbReference type="HOGENOM" id="CLU_084338_1_1_9"/>
<dbReference type="Proteomes" id="UP000001946">
    <property type="component" value="Chromosome"/>
</dbReference>
<dbReference type="GO" id="GO:0005886">
    <property type="term" value="C:plasma membrane"/>
    <property type="evidence" value="ECO:0007669"/>
    <property type="project" value="UniProtKB-SubCell"/>
</dbReference>
<dbReference type="GO" id="GO:0045259">
    <property type="term" value="C:proton-transporting ATP synthase complex"/>
    <property type="evidence" value="ECO:0007669"/>
    <property type="project" value="UniProtKB-KW"/>
</dbReference>
<dbReference type="GO" id="GO:0005524">
    <property type="term" value="F:ATP binding"/>
    <property type="evidence" value="ECO:0007669"/>
    <property type="project" value="UniProtKB-UniRule"/>
</dbReference>
<dbReference type="GO" id="GO:0046933">
    <property type="term" value="F:proton-transporting ATP synthase activity, rotational mechanism"/>
    <property type="evidence" value="ECO:0007669"/>
    <property type="project" value="UniProtKB-UniRule"/>
</dbReference>
<dbReference type="CDD" id="cd12152">
    <property type="entry name" value="F1-ATPase_delta"/>
    <property type="match status" value="1"/>
</dbReference>
<dbReference type="Gene3D" id="1.20.5.440">
    <property type="entry name" value="ATP synthase delta/epsilon subunit, C-terminal domain"/>
    <property type="match status" value="1"/>
</dbReference>
<dbReference type="Gene3D" id="2.60.15.10">
    <property type="entry name" value="F0F1 ATP synthase delta/epsilon subunit, N-terminal"/>
    <property type="match status" value="1"/>
</dbReference>
<dbReference type="HAMAP" id="MF_00530">
    <property type="entry name" value="ATP_synth_epsil_bac"/>
    <property type="match status" value="1"/>
</dbReference>
<dbReference type="InterPro" id="IPR036794">
    <property type="entry name" value="ATP_F1_dsu/esu_C_sf"/>
</dbReference>
<dbReference type="InterPro" id="IPR001469">
    <property type="entry name" value="ATP_synth_F1_dsu/esu"/>
</dbReference>
<dbReference type="InterPro" id="IPR020546">
    <property type="entry name" value="ATP_synth_F1_dsu/esu_N"/>
</dbReference>
<dbReference type="InterPro" id="IPR020547">
    <property type="entry name" value="ATP_synth_F1_esu_C"/>
</dbReference>
<dbReference type="InterPro" id="IPR036771">
    <property type="entry name" value="ATPsynth_dsu/esu_N"/>
</dbReference>
<dbReference type="NCBIfam" id="TIGR01216">
    <property type="entry name" value="ATP_synt_epsi"/>
    <property type="match status" value="1"/>
</dbReference>
<dbReference type="NCBIfam" id="NF001846">
    <property type="entry name" value="PRK00571.1-3"/>
    <property type="match status" value="1"/>
</dbReference>
<dbReference type="NCBIfam" id="NF009980">
    <property type="entry name" value="PRK13446.1"/>
    <property type="match status" value="1"/>
</dbReference>
<dbReference type="PANTHER" id="PTHR13822">
    <property type="entry name" value="ATP SYNTHASE DELTA/EPSILON CHAIN"/>
    <property type="match status" value="1"/>
</dbReference>
<dbReference type="PANTHER" id="PTHR13822:SF10">
    <property type="entry name" value="ATP SYNTHASE EPSILON CHAIN, CHLOROPLASTIC"/>
    <property type="match status" value="1"/>
</dbReference>
<dbReference type="Pfam" id="PF00401">
    <property type="entry name" value="ATP-synt_DE"/>
    <property type="match status" value="1"/>
</dbReference>
<dbReference type="Pfam" id="PF02823">
    <property type="entry name" value="ATP-synt_DE_N"/>
    <property type="match status" value="1"/>
</dbReference>
<dbReference type="SUPFAM" id="SSF46604">
    <property type="entry name" value="Epsilon subunit of F1F0-ATP synthase C-terminal domain"/>
    <property type="match status" value="1"/>
</dbReference>
<dbReference type="SUPFAM" id="SSF51344">
    <property type="entry name" value="Epsilon subunit of F1F0-ATP synthase N-terminal domain"/>
    <property type="match status" value="1"/>
</dbReference>
<comment type="function">
    <text evidence="1">Produces ATP from ADP in the presence of a proton gradient across the membrane.</text>
</comment>
<comment type="subunit">
    <text>F-type ATPases have 2 components, CF(1) - the catalytic core - and CF(0) - the membrane proton channel. CF(1) has five subunits: alpha(3), beta(3), gamma(1), delta(1), epsilon(1). CF(0) has three main subunits: a, b and c.</text>
</comment>
<comment type="subcellular location">
    <subcellularLocation>
        <location evidence="1">Cell membrane</location>
        <topology evidence="1">Peripheral membrane protein</topology>
    </subcellularLocation>
</comment>
<comment type="similarity">
    <text evidence="1">Belongs to the ATPase epsilon chain family.</text>
</comment>
<name>ATPE_DESHY</name>
<reference key="1">
    <citation type="journal article" date="2006" name="J. Bacteriol.">
        <title>Complete genome sequence of the dehalorespiring bacterium Desulfitobacterium hafniense Y51 and comparison with Dehalococcoides ethenogenes 195.</title>
        <authorList>
            <person name="Nonaka H."/>
            <person name="Keresztes G."/>
            <person name="Shinoda Y."/>
            <person name="Ikenaga Y."/>
            <person name="Abe M."/>
            <person name="Naito K."/>
            <person name="Inatomi K."/>
            <person name="Furukawa K."/>
            <person name="Inui M."/>
            <person name="Yukawa H."/>
        </authorList>
    </citation>
    <scope>NUCLEOTIDE SEQUENCE [LARGE SCALE GENOMIC DNA]</scope>
    <source>
        <strain>Y51</strain>
    </source>
</reference>
<organism>
    <name type="scientific">Desulfitobacterium hafniense (strain Y51)</name>
    <dbReference type="NCBI Taxonomy" id="138119"/>
    <lineage>
        <taxon>Bacteria</taxon>
        <taxon>Bacillati</taxon>
        <taxon>Bacillota</taxon>
        <taxon>Clostridia</taxon>
        <taxon>Eubacteriales</taxon>
        <taxon>Desulfitobacteriaceae</taxon>
        <taxon>Desulfitobacterium</taxon>
    </lineage>
</organism>
<proteinExistence type="inferred from homology"/>
<gene>
    <name evidence="1" type="primary">atpC</name>
    <name type="ordered locus">DSY4911</name>
</gene>